<protein>
    <recommendedName>
        <fullName>Thymidylate synthase 1/2</fullName>
        <shortName>TS 1/2</shortName>
        <shortName>TSase 1/2</shortName>
        <ecNumber>2.1.1.45</ecNumber>
    </recommendedName>
</protein>
<organism>
    <name type="scientific">Encephalitozoon cuniculi (strain GB-M1)</name>
    <name type="common">Microsporidian parasite</name>
    <dbReference type="NCBI Taxonomy" id="284813"/>
    <lineage>
        <taxon>Eukaryota</taxon>
        <taxon>Fungi</taxon>
        <taxon>Fungi incertae sedis</taxon>
        <taxon>Microsporidia</taxon>
        <taxon>Unikaryonidae</taxon>
        <taxon>Encephalitozoon</taxon>
    </lineage>
</organism>
<comment type="catalytic activity">
    <reaction>
        <text>dUMP + (6R)-5,10-methylene-5,6,7,8-tetrahydrofolate = 7,8-dihydrofolate + dTMP</text>
        <dbReference type="Rhea" id="RHEA:12104"/>
        <dbReference type="ChEBI" id="CHEBI:15636"/>
        <dbReference type="ChEBI" id="CHEBI:57451"/>
        <dbReference type="ChEBI" id="CHEBI:63528"/>
        <dbReference type="ChEBI" id="CHEBI:246422"/>
        <dbReference type="EC" id="2.1.1.45"/>
    </reaction>
</comment>
<comment type="pathway">
    <text>Pyrimidine metabolism; dTTP biosynthesis.</text>
</comment>
<comment type="similarity">
    <text evidence="2">Belongs to the thymidylate synthase family.</text>
</comment>
<gene>
    <name type="primary">TS-1</name>
    <name type="ordered locus">ECU01_0180</name>
</gene>
<gene>
    <name type="primary">TS-2</name>
    <name type="ordered locus">ECU01_1430</name>
</gene>
<feature type="chain" id="PRO_0000140906" description="Thymidylate synthase 1/2">
    <location>
        <begin position="1"/>
        <end position="294"/>
    </location>
</feature>
<feature type="active site" description="Nucleophile" evidence="1">
    <location>
        <position position="174"/>
    </location>
</feature>
<feature type="binding site" description="in other chain" evidence="1">
    <location>
        <position position="29"/>
    </location>
    <ligand>
        <name>dUMP</name>
        <dbReference type="ChEBI" id="CHEBI:246422"/>
        <note>ligand shared between dimeric partners</note>
    </ligand>
</feature>
<feature type="binding site" evidence="1">
    <location>
        <begin position="154"/>
        <end position="155"/>
    </location>
    <ligand>
        <name>dUMP</name>
        <dbReference type="ChEBI" id="CHEBI:246422"/>
        <note>ligand shared between dimeric partners</note>
    </ligand>
</feature>
<feature type="binding site" description="in other chain" evidence="1">
    <location>
        <begin position="194"/>
        <end position="197"/>
    </location>
    <ligand>
        <name>dUMP</name>
        <dbReference type="ChEBI" id="CHEBI:246422"/>
        <note>ligand shared between dimeric partners</note>
    </ligand>
</feature>
<feature type="binding site" evidence="1">
    <location>
        <position position="197"/>
    </location>
    <ligand>
        <name>(6R)-5,10-methylene-5,6,7,8-tetrahydrofolate</name>
        <dbReference type="ChEBI" id="CHEBI:15636"/>
    </ligand>
</feature>
<feature type="binding site" description="in other chain" evidence="1">
    <location>
        <position position="205"/>
    </location>
    <ligand>
        <name>dUMP</name>
        <dbReference type="ChEBI" id="CHEBI:246422"/>
        <note>ligand shared between dimeric partners</note>
    </ligand>
</feature>
<feature type="binding site" description="in other chain" evidence="1">
    <location>
        <begin position="235"/>
        <end position="237"/>
    </location>
    <ligand>
        <name>dUMP</name>
        <dbReference type="ChEBI" id="CHEBI:246422"/>
        <note>ligand shared between dimeric partners</note>
    </ligand>
</feature>
<feature type="sequence conflict" description="In Ref. 2; CAA06648." evidence="2" ref="2">
    <original>T</original>
    <variation>A</variation>
    <location>
        <position position="34"/>
    </location>
</feature>
<feature type="helix" evidence="3">
    <location>
        <begin position="9"/>
        <end position="22"/>
    </location>
</feature>
<feature type="strand" evidence="3">
    <location>
        <begin position="24"/>
        <end position="26"/>
    </location>
</feature>
<feature type="strand" evidence="3">
    <location>
        <begin position="34"/>
        <end position="45"/>
    </location>
</feature>
<feature type="helix" evidence="3">
    <location>
        <begin position="47"/>
        <end position="49"/>
    </location>
</feature>
<feature type="strand" evidence="3">
    <location>
        <begin position="55"/>
        <end position="57"/>
    </location>
</feature>
<feature type="helix" evidence="3">
    <location>
        <begin position="61"/>
        <end position="72"/>
    </location>
</feature>
<feature type="helix" evidence="3">
    <location>
        <begin position="79"/>
        <end position="82"/>
    </location>
</feature>
<feature type="turn" evidence="3">
    <location>
        <begin position="83"/>
        <end position="85"/>
    </location>
</feature>
<feature type="helix" evidence="3">
    <location>
        <begin position="114"/>
        <end position="119"/>
    </location>
</feature>
<feature type="strand" evidence="3">
    <location>
        <begin position="135"/>
        <end position="137"/>
    </location>
</feature>
<feature type="helix" evidence="3">
    <location>
        <begin position="139"/>
        <end position="149"/>
    </location>
</feature>
<feature type="strand" evidence="3">
    <location>
        <begin position="157"/>
        <end position="159"/>
    </location>
</feature>
<feature type="helix" evidence="3">
    <location>
        <begin position="166"/>
        <end position="170"/>
    </location>
</feature>
<feature type="strand" evidence="3">
    <location>
        <begin position="174"/>
        <end position="183"/>
    </location>
</feature>
<feature type="strand" evidence="3">
    <location>
        <begin position="186"/>
        <end position="197"/>
    </location>
</feature>
<feature type="turn" evidence="3">
    <location>
        <begin position="198"/>
        <end position="200"/>
    </location>
</feature>
<feature type="helix" evidence="3">
    <location>
        <begin position="201"/>
        <end position="219"/>
    </location>
</feature>
<feature type="strand" evidence="3">
    <location>
        <begin position="223"/>
        <end position="237"/>
    </location>
</feature>
<feature type="helix" evidence="3">
    <location>
        <begin position="238"/>
        <end position="240"/>
    </location>
</feature>
<feature type="helix" evidence="3">
    <location>
        <begin position="241"/>
        <end position="247"/>
    </location>
</feature>
<feature type="strand" evidence="3">
    <location>
        <begin position="257"/>
        <end position="260"/>
    </location>
</feature>
<feature type="helix" evidence="3">
    <location>
        <begin position="269"/>
        <end position="271"/>
    </location>
</feature>
<feature type="helix" evidence="3">
    <location>
        <begin position="274"/>
        <end position="276"/>
    </location>
</feature>
<feature type="strand" evidence="3">
    <location>
        <begin position="277"/>
        <end position="281"/>
    </location>
</feature>
<name>TYS1_ENCCU</name>
<evidence type="ECO:0000250" key="1">
    <source>
        <dbReference type="UniProtKB" id="P0A884"/>
    </source>
</evidence>
<evidence type="ECO:0000305" key="2"/>
<evidence type="ECO:0007829" key="3">
    <source>
        <dbReference type="PDB" id="3KGB"/>
    </source>
</evidence>
<sequence>MPQDPRHPEHQYLDLVKHILENGARRMDRTGTGTLSVFGATMRFSLEDNTFPLLTTRRVFYRGVVEELLFFLRGETDSKVLEKKGVRIWEKNGAKQFLQSVGIDREEGDLGPIYGFQWRHFGARYETSASSYEGKGVDQIASAIAAIRANPASRRIVVSAWNPTDLGSMALPPCHVLFQFNVTDGKLSCAMYQRSGDMGLGVPFNIASYSLLTILVAHLTGLQPGEFVHFLGDAHVYLDHVDSLRQQIQRPPRAFPKLFVSPKGPRTEPEHFQYEDFELVGYDPHPAIKMNMSA</sequence>
<dbReference type="EC" id="2.1.1.45"/>
<dbReference type="EMBL" id="AJ005644">
    <property type="protein sequence ID" value="CAA06648.1"/>
    <property type="molecule type" value="Genomic_DNA"/>
</dbReference>
<dbReference type="EMBL" id="AL391737">
    <property type="protein sequence ID" value="CAD24888.1"/>
    <property type="molecule type" value="Genomic_DNA"/>
</dbReference>
<dbReference type="EMBL" id="AL391737">
    <property type="protein sequence ID" value="CAD25016.1"/>
    <property type="molecule type" value="Genomic_DNA"/>
</dbReference>
<dbReference type="RefSeq" id="XP_965853.1">
    <property type="nucleotide sequence ID" value="XM_960760.1"/>
</dbReference>
<dbReference type="RefSeq" id="XP_965981.1">
    <property type="nucleotide sequence ID" value="XM_960888.1"/>
</dbReference>
<dbReference type="PDB" id="3KGB">
    <property type="method" value="X-ray"/>
    <property type="resolution" value="2.20 A"/>
    <property type="chains" value="A=1-294"/>
</dbReference>
<dbReference type="PDBsum" id="3KGB"/>
<dbReference type="SMR" id="O62584"/>
<dbReference type="STRING" id="284813.O62584"/>
<dbReference type="VEuPathDB" id="MicrosporidiaDB:ECU01_0180"/>
<dbReference type="VEuPathDB" id="MicrosporidiaDB:ECU01_1430"/>
<dbReference type="HOGENOM" id="CLU_021669_0_2_1"/>
<dbReference type="InParanoid" id="O62584"/>
<dbReference type="OMA" id="AYGRFWR"/>
<dbReference type="OrthoDB" id="766at2759"/>
<dbReference type="UniPathway" id="UPA00575"/>
<dbReference type="EvolutionaryTrace" id="O62584"/>
<dbReference type="Proteomes" id="UP000000819">
    <property type="component" value="Chromosome I"/>
</dbReference>
<dbReference type="GO" id="GO:0005829">
    <property type="term" value="C:cytosol"/>
    <property type="evidence" value="ECO:0007669"/>
    <property type="project" value="TreeGrafter"/>
</dbReference>
<dbReference type="GO" id="GO:0005739">
    <property type="term" value="C:mitochondrion"/>
    <property type="evidence" value="ECO:0007669"/>
    <property type="project" value="TreeGrafter"/>
</dbReference>
<dbReference type="GO" id="GO:0004799">
    <property type="term" value="F:thymidylate synthase activity"/>
    <property type="evidence" value="ECO:0007669"/>
    <property type="project" value="UniProtKB-EC"/>
</dbReference>
<dbReference type="GO" id="GO:0006231">
    <property type="term" value="P:dTMP biosynthetic process"/>
    <property type="evidence" value="ECO:0007669"/>
    <property type="project" value="InterPro"/>
</dbReference>
<dbReference type="GO" id="GO:0006235">
    <property type="term" value="P:dTTP biosynthetic process"/>
    <property type="evidence" value="ECO:0007669"/>
    <property type="project" value="UniProtKB-UniPathway"/>
</dbReference>
<dbReference type="GO" id="GO:0032259">
    <property type="term" value="P:methylation"/>
    <property type="evidence" value="ECO:0007669"/>
    <property type="project" value="UniProtKB-KW"/>
</dbReference>
<dbReference type="CDD" id="cd00351">
    <property type="entry name" value="TS_Pyrimidine_HMase"/>
    <property type="match status" value="1"/>
</dbReference>
<dbReference type="FunFam" id="3.30.572.10:FF:000013">
    <property type="entry name" value="Thymidylate synthase"/>
    <property type="match status" value="1"/>
</dbReference>
<dbReference type="Gene3D" id="3.30.572.10">
    <property type="entry name" value="Thymidylate synthase/dCMP hydroxymethylase domain"/>
    <property type="match status" value="1"/>
</dbReference>
<dbReference type="HAMAP" id="MF_00008">
    <property type="entry name" value="Thymidy_synth_bact"/>
    <property type="match status" value="1"/>
</dbReference>
<dbReference type="InterPro" id="IPR045097">
    <property type="entry name" value="Thymidate_synth/dCMP_Mease"/>
</dbReference>
<dbReference type="InterPro" id="IPR023451">
    <property type="entry name" value="Thymidate_synth/dCMP_Mease_dom"/>
</dbReference>
<dbReference type="InterPro" id="IPR036926">
    <property type="entry name" value="Thymidate_synth/dCMP_Mease_sf"/>
</dbReference>
<dbReference type="InterPro" id="IPR000398">
    <property type="entry name" value="Thymidylate_synthase"/>
</dbReference>
<dbReference type="InterPro" id="IPR020940">
    <property type="entry name" value="Thymidylate_synthase_AS"/>
</dbReference>
<dbReference type="NCBIfam" id="NF002497">
    <property type="entry name" value="PRK01827.1-3"/>
    <property type="match status" value="1"/>
</dbReference>
<dbReference type="NCBIfam" id="TIGR03284">
    <property type="entry name" value="thym_sym"/>
    <property type="match status" value="1"/>
</dbReference>
<dbReference type="PANTHER" id="PTHR11548:SF2">
    <property type="entry name" value="THYMIDYLATE SYNTHASE"/>
    <property type="match status" value="1"/>
</dbReference>
<dbReference type="PANTHER" id="PTHR11548">
    <property type="entry name" value="THYMIDYLATE SYNTHASE 1"/>
    <property type="match status" value="1"/>
</dbReference>
<dbReference type="Pfam" id="PF00303">
    <property type="entry name" value="Thymidylat_synt"/>
    <property type="match status" value="1"/>
</dbReference>
<dbReference type="PRINTS" id="PR00108">
    <property type="entry name" value="THYMDSNTHASE"/>
</dbReference>
<dbReference type="SUPFAM" id="SSF55831">
    <property type="entry name" value="Thymidylate synthase/dCMP hydroxymethylase"/>
    <property type="match status" value="1"/>
</dbReference>
<dbReference type="PROSITE" id="PS00091">
    <property type="entry name" value="THYMIDYLATE_SYNTHASE"/>
    <property type="match status" value="1"/>
</dbReference>
<proteinExistence type="evidence at protein level"/>
<accession>O62584</accession>
<accession>Q8SQI4</accession>
<keyword id="KW-0002">3D-structure</keyword>
<keyword id="KW-0489">Methyltransferase</keyword>
<keyword id="KW-0545">Nucleotide biosynthesis</keyword>
<keyword id="KW-1185">Reference proteome</keyword>
<keyword id="KW-0808">Transferase</keyword>
<reference key="1">
    <citation type="journal article" date="1998" name="Microb. Comp. Genomics">
        <title>First report on the systematic sequencing of the small genome of Encephalitozoon cuniculi (Protozoa, Microspora): gene organization of a 4.3 kbp region on chromosome I.</title>
        <authorList>
            <person name="Duffieux F."/>
            <person name="Peyret P."/>
            <person name="Roe B.A."/>
            <person name="Vivares C.P."/>
        </authorList>
    </citation>
    <scope>NUCLEOTIDE SEQUENCE [GENOMIC DNA]</scope>
</reference>
<reference key="2">
    <citation type="journal article" date="2001" name="Genome Res.">
        <title>Sequence and analysis of chromosome I of the amitochondriate intracellular parasite Encephalitozoon cuniculi (Microspora).</title>
        <authorList>
            <person name="Peyret P."/>
            <person name="Katinka M.D."/>
            <person name="Duprat S."/>
            <person name="Duffieux F."/>
            <person name="Barbe V."/>
            <person name="Barbazanges M."/>
            <person name="Weissenbach J."/>
            <person name="Saurin W."/>
            <person name="Vivares C.P."/>
        </authorList>
    </citation>
    <scope>NUCLEOTIDE SEQUENCE [LARGE SCALE GENOMIC DNA]</scope>
    <source>
        <strain>GB-M1</strain>
    </source>
</reference>
<reference key="3">
    <citation type="journal article" date="2001" name="Nature">
        <title>Genome sequence and gene compaction of the eukaryote parasite Encephalitozoon cuniculi.</title>
        <authorList>
            <person name="Katinka M.D."/>
            <person name="Duprat S."/>
            <person name="Cornillot E."/>
            <person name="Metenier G."/>
            <person name="Thomarat F."/>
            <person name="Prensier G."/>
            <person name="Barbe V."/>
            <person name="Peyretaillade E."/>
            <person name="Brottier P."/>
            <person name="Wincker P."/>
            <person name="Delbac F."/>
            <person name="El Alaoui H."/>
            <person name="Peyret P."/>
            <person name="Saurin W."/>
            <person name="Gouy M."/>
            <person name="Weissenbach J."/>
            <person name="Vivares C.P."/>
        </authorList>
    </citation>
    <scope>NUCLEOTIDE SEQUENCE [LARGE SCALE GENOMIC DNA]</scope>
    <source>
        <strain>GB-M1</strain>
    </source>
</reference>